<organism>
    <name type="scientific">Phenylobacterium zucineum (strain HLK1)</name>
    <dbReference type="NCBI Taxonomy" id="450851"/>
    <lineage>
        <taxon>Bacteria</taxon>
        <taxon>Pseudomonadati</taxon>
        <taxon>Pseudomonadota</taxon>
        <taxon>Alphaproteobacteria</taxon>
        <taxon>Caulobacterales</taxon>
        <taxon>Caulobacteraceae</taxon>
        <taxon>Phenylobacterium</taxon>
    </lineage>
</organism>
<reference key="1">
    <citation type="journal article" date="2008" name="BMC Genomics">
        <title>Complete genome of Phenylobacterium zucineum - a novel facultative intracellular bacterium isolated from human erythroleukemia cell line K562.</title>
        <authorList>
            <person name="Luo Y."/>
            <person name="Xu X."/>
            <person name="Ding Z."/>
            <person name="Liu Z."/>
            <person name="Zhang B."/>
            <person name="Yan Z."/>
            <person name="Sun J."/>
            <person name="Hu S."/>
            <person name="Hu X."/>
        </authorList>
    </citation>
    <scope>NUCLEOTIDE SEQUENCE [LARGE SCALE GENOMIC DNA]</scope>
    <source>
        <strain>HLK1</strain>
    </source>
</reference>
<evidence type="ECO:0000255" key="1">
    <source>
        <dbReference type="HAMAP-Rule" id="MF_01321"/>
    </source>
</evidence>
<sequence>MAQSFTGKKRIRKSFGRIPEAVQMPNLIEVQRSSYEQFLQREVRAGERRDEGIEAVFKSVFPIKDFNERAVLEYVSYEFEEPKYDVEECVQRDMTYAAPLKVKLRLIVFETDEETGARSVKDIKEQDVYMGDIPLMTEKGTFIVNGTQRVIVSQMHRSPGVFFDHDKGKTHASGKLLFAARVIPYRGSWLDFEFDAKDIVYVRIDRRRKLPATTFLMALGMDGEEILSTFYETVPYEKKGDGWATPYKPERWRGVKPEFPLIDADTGEEIAPAGQKISARNAKKFADNGLKTLLLAPEALTGRYLAKDLVNFETGEIYAEAGDELDPTLLAALEEQGFTTLDVLDIDEVTVGAYIRNTLRVDKNTAREDALFDIYRVMRPGEPPTVEAAEAMFKSLFFDSERYDLSSVGRVKMNMRLELDCPDDVRVIRKEDVIAVLLTLVGLRDGRGEIDDIDNLGNRRVRSVGELLENQYRVGLLRMERAIKERMSSVDIDTVMPHDLINAKPAAAAVREFFGSSQLSQFMDQTNPLSEITHKRRLSALGPGGLTRERAGFEVRDVHPTHYGRICPIETPEGPNIGLINSLATHAVVNKYGFIESPYRRIRDGKTTDEVVYMSAMEEAKHVIAQANIKLENGEIVEDLVPGRINGEPSLLPKADVDLMDVSPKQVVSVAASLIPFLENDDANRALMGSNMQKQAVPLIQSDAPLVGTGMESIVAVDSGAVVVARRTGVVEQIDGTRIVVRATEETDPSKPGVDIYRLQKFQRSNTSTCINQRPLVRVGDKINAGDVIADGPSTELGELALGRNALVAFMPWNGYNFEDSILISERIVRDDVFTSIHIEEFEVMARDTKLGPEEITRDIPNVGEEALRNLDEAGIVAIGAEVQPGDILVGKVTPKGESPMTPEEKLLRAIFGEKASDVRDTSLRLPPGVSGTIVEVRVFNRHGVDKDERALAIERAEIDRLGKDRDDEFAILNRNMQGRLRQLLVGKTAVSGPKGLGRGEITAEKLEEIAPGLWWQIALDDEKAMGELEALRKQFDDARKRLDRRFEDKVDKLQRGDELPPGVMKMVKVFVAVKRKLQPGDKMAGRHGNKGVISKILPIEDMPYLEDGTSVDIVLNPLGVPSRMNVGQIFETHLGWAAAGLGKQVQRLLEDWQHGGQKQALIEHLRDVYGPDEELPDTEEELVELARNLSKGIPFATPVFDGAHIDDIENLLEKAGLDRSGQSYLYDGQSGERFKRPVTVGYIYMLKLHHLVDDKIHARSIGPYSLVTQQPLGGKAQFGGQRFGEMEVWALEAYGAAYTLQEMLTVKSDDVAGRTKVYESIVRGDDTFEAGIPESFNVLVKEMRSLGLNVELENS</sequence>
<proteinExistence type="inferred from homology"/>
<protein>
    <recommendedName>
        <fullName evidence="1">DNA-directed RNA polymerase subunit beta</fullName>
        <shortName evidence="1">RNAP subunit beta</shortName>
        <ecNumber evidence="1">2.7.7.6</ecNumber>
    </recommendedName>
    <alternativeName>
        <fullName evidence="1">RNA polymerase subunit beta</fullName>
    </alternativeName>
    <alternativeName>
        <fullName evidence="1">Transcriptase subunit beta</fullName>
    </alternativeName>
</protein>
<comment type="function">
    <text evidence="1">DNA-dependent RNA polymerase catalyzes the transcription of DNA into RNA using the four ribonucleoside triphosphates as substrates.</text>
</comment>
<comment type="catalytic activity">
    <reaction evidence="1">
        <text>RNA(n) + a ribonucleoside 5'-triphosphate = RNA(n+1) + diphosphate</text>
        <dbReference type="Rhea" id="RHEA:21248"/>
        <dbReference type="Rhea" id="RHEA-COMP:14527"/>
        <dbReference type="Rhea" id="RHEA-COMP:17342"/>
        <dbReference type="ChEBI" id="CHEBI:33019"/>
        <dbReference type="ChEBI" id="CHEBI:61557"/>
        <dbReference type="ChEBI" id="CHEBI:140395"/>
        <dbReference type="EC" id="2.7.7.6"/>
    </reaction>
</comment>
<comment type="subunit">
    <text evidence="1">The RNAP catalytic core consists of 2 alpha, 1 beta, 1 beta' and 1 omega subunit. When a sigma factor is associated with the core the holoenzyme is formed, which can initiate transcription.</text>
</comment>
<comment type="similarity">
    <text evidence="1">Belongs to the RNA polymerase beta chain family.</text>
</comment>
<accession>B4R8K5</accession>
<feature type="chain" id="PRO_1000141716" description="DNA-directed RNA polymerase subunit beta">
    <location>
        <begin position="1"/>
        <end position="1356"/>
    </location>
</feature>
<name>RPOB_PHEZH</name>
<keyword id="KW-0240">DNA-directed RNA polymerase</keyword>
<keyword id="KW-0548">Nucleotidyltransferase</keyword>
<keyword id="KW-1185">Reference proteome</keyword>
<keyword id="KW-0804">Transcription</keyword>
<keyword id="KW-0808">Transferase</keyword>
<dbReference type="EC" id="2.7.7.6" evidence="1"/>
<dbReference type="EMBL" id="CP000747">
    <property type="protein sequence ID" value="ACG77632.1"/>
    <property type="molecule type" value="Genomic_DNA"/>
</dbReference>
<dbReference type="RefSeq" id="WP_012521777.1">
    <property type="nucleotide sequence ID" value="NC_011144.1"/>
</dbReference>
<dbReference type="SMR" id="B4R8K5"/>
<dbReference type="STRING" id="450851.PHZ_c1218"/>
<dbReference type="KEGG" id="pzu:PHZ_c1218"/>
<dbReference type="eggNOG" id="COG0085">
    <property type="taxonomic scope" value="Bacteria"/>
</dbReference>
<dbReference type="HOGENOM" id="CLU_000524_4_0_5"/>
<dbReference type="OrthoDB" id="9803954at2"/>
<dbReference type="Proteomes" id="UP000001868">
    <property type="component" value="Chromosome"/>
</dbReference>
<dbReference type="GO" id="GO:0000428">
    <property type="term" value="C:DNA-directed RNA polymerase complex"/>
    <property type="evidence" value="ECO:0007669"/>
    <property type="project" value="UniProtKB-KW"/>
</dbReference>
<dbReference type="GO" id="GO:0003677">
    <property type="term" value="F:DNA binding"/>
    <property type="evidence" value="ECO:0007669"/>
    <property type="project" value="UniProtKB-UniRule"/>
</dbReference>
<dbReference type="GO" id="GO:0003899">
    <property type="term" value="F:DNA-directed RNA polymerase activity"/>
    <property type="evidence" value="ECO:0007669"/>
    <property type="project" value="UniProtKB-UniRule"/>
</dbReference>
<dbReference type="GO" id="GO:0032549">
    <property type="term" value="F:ribonucleoside binding"/>
    <property type="evidence" value="ECO:0007669"/>
    <property type="project" value="InterPro"/>
</dbReference>
<dbReference type="GO" id="GO:0006351">
    <property type="term" value="P:DNA-templated transcription"/>
    <property type="evidence" value="ECO:0007669"/>
    <property type="project" value="UniProtKB-UniRule"/>
</dbReference>
<dbReference type="CDD" id="cd00653">
    <property type="entry name" value="RNA_pol_B_RPB2"/>
    <property type="match status" value="1"/>
</dbReference>
<dbReference type="FunFam" id="3.90.1800.10:FF:000001">
    <property type="entry name" value="DNA-directed RNA polymerase subunit beta"/>
    <property type="match status" value="1"/>
</dbReference>
<dbReference type="Gene3D" id="2.40.50.100">
    <property type="match status" value="1"/>
</dbReference>
<dbReference type="Gene3D" id="2.40.50.150">
    <property type="match status" value="1"/>
</dbReference>
<dbReference type="Gene3D" id="3.90.1100.10">
    <property type="match status" value="2"/>
</dbReference>
<dbReference type="Gene3D" id="6.10.140.1670">
    <property type="match status" value="1"/>
</dbReference>
<dbReference type="Gene3D" id="2.30.150.10">
    <property type="entry name" value="DNA-directed RNA polymerase, beta subunit, external 1 domain"/>
    <property type="match status" value="1"/>
</dbReference>
<dbReference type="Gene3D" id="2.40.270.10">
    <property type="entry name" value="DNA-directed RNA polymerase, subunit 2, domain 6"/>
    <property type="match status" value="1"/>
</dbReference>
<dbReference type="Gene3D" id="3.90.1800.10">
    <property type="entry name" value="RNA polymerase alpha subunit dimerisation domain"/>
    <property type="match status" value="1"/>
</dbReference>
<dbReference type="Gene3D" id="3.90.1110.10">
    <property type="entry name" value="RNA polymerase Rpb2, domain 2"/>
    <property type="match status" value="1"/>
</dbReference>
<dbReference type="HAMAP" id="MF_01321">
    <property type="entry name" value="RNApol_bact_RpoB"/>
    <property type="match status" value="1"/>
</dbReference>
<dbReference type="InterPro" id="IPR042107">
    <property type="entry name" value="DNA-dir_RNA_pol_bsu_ext_1_sf"/>
</dbReference>
<dbReference type="InterPro" id="IPR019462">
    <property type="entry name" value="DNA-dir_RNA_pol_bsu_external_1"/>
</dbReference>
<dbReference type="InterPro" id="IPR015712">
    <property type="entry name" value="DNA-dir_RNA_pol_su2"/>
</dbReference>
<dbReference type="InterPro" id="IPR007120">
    <property type="entry name" value="DNA-dir_RNAP_su2_dom"/>
</dbReference>
<dbReference type="InterPro" id="IPR037033">
    <property type="entry name" value="DNA-dir_RNAP_su2_hyb_sf"/>
</dbReference>
<dbReference type="InterPro" id="IPR010243">
    <property type="entry name" value="RNA_pol_bsu_bac"/>
</dbReference>
<dbReference type="InterPro" id="IPR007121">
    <property type="entry name" value="RNA_pol_bsu_CS"/>
</dbReference>
<dbReference type="InterPro" id="IPR007644">
    <property type="entry name" value="RNA_pol_bsu_protrusion"/>
</dbReference>
<dbReference type="InterPro" id="IPR007642">
    <property type="entry name" value="RNA_pol_Rpb2_2"/>
</dbReference>
<dbReference type="InterPro" id="IPR037034">
    <property type="entry name" value="RNA_pol_Rpb2_2_sf"/>
</dbReference>
<dbReference type="InterPro" id="IPR007645">
    <property type="entry name" value="RNA_pol_Rpb2_3"/>
</dbReference>
<dbReference type="InterPro" id="IPR007641">
    <property type="entry name" value="RNA_pol_Rpb2_7"/>
</dbReference>
<dbReference type="InterPro" id="IPR014724">
    <property type="entry name" value="RNA_pol_RPB2_OB-fold"/>
</dbReference>
<dbReference type="NCBIfam" id="NF001616">
    <property type="entry name" value="PRK00405.1"/>
    <property type="match status" value="1"/>
</dbReference>
<dbReference type="NCBIfam" id="TIGR02013">
    <property type="entry name" value="rpoB"/>
    <property type="match status" value="1"/>
</dbReference>
<dbReference type="PANTHER" id="PTHR20856">
    <property type="entry name" value="DNA-DIRECTED RNA POLYMERASE I SUBUNIT 2"/>
    <property type="match status" value="1"/>
</dbReference>
<dbReference type="Pfam" id="PF04563">
    <property type="entry name" value="RNA_pol_Rpb2_1"/>
    <property type="match status" value="1"/>
</dbReference>
<dbReference type="Pfam" id="PF04561">
    <property type="entry name" value="RNA_pol_Rpb2_2"/>
    <property type="match status" value="2"/>
</dbReference>
<dbReference type="Pfam" id="PF04565">
    <property type="entry name" value="RNA_pol_Rpb2_3"/>
    <property type="match status" value="1"/>
</dbReference>
<dbReference type="Pfam" id="PF10385">
    <property type="entry name" value="RNA_pol_Rpb2_45"/>
    <property type="match status" value="1"/>
</dbReference>
<dbReference type="Pfam" id="PF00562">
    <property type="entry name" value="RNA_pol_Rpb2_6"/>
    <property type="match status" value="1"/>
</dbReference>
<dbReference type="Pfam" id="PF04560">
    <property type="entry name" value="RNA_pol_Rpb2_7"/>
    <property type="match status" value="1"/>
</dbReference>
<dbReference type="SUPFAM" id="SSF64484">
    <property type="entry name" value="beta and beta-prime subunits of DNA dependent RNA-polymerase"/>
    <property type="match status" value="1"/>
</dbReference>
<dbReference type="PROSITE" id="PS01166">
    <property type="entry name" value="RNA_POL_BETA"/>
    <property type="match status" value="1"/>
</dbReference>
<gene>
    <name evidence="1" type="primary">rpoB</name>
    <name type="ordered locus">PHZ_c1218</name>
</gene>